<proteinExistence type="inferred from homology"/>
<reference key="1">
    <citation type="submission" date="2003-03" db="EMBL/GenBank/DDBJ databases">
        <title>The complete genome sequence of Neisseria gonorrhoeae.</title>
        <authorList>
            <person name="Lewis L.A."/>
            <person name="Gillaspy A.F."/>
            <person name="McLaughlin R.E."/>
            <person name="Gipson M."/>
            <person name="Ducey T.F."/>
            <person name="Ownbey T."/>
            <person name="Hartman K."/>
            <person name="Nydick C."/>
            <person name="Carson M.B."/>
            <person name="Vaughn J."/>
            <person name="Thomson C."/>
            <person name="Song L."/>
            <person name="Lin S."/>
            <person name="Yuan X."/>
            <person name="Najar F."/>
            <person name="Zhan M."/>
            <person name="Ren Q."/>
            <person name="Zhu H."/>
            <person name="Qi S."/>
            <person name="Kenton S.M."/>
            <person name="Lai H."/>
            <person name="White J.D."/>
            <person name="Clifton S."/>
            <person name="Roe B.A."/>
            <person name="Dyer D.W."/>
        </authorList>
    </citation>
    <scope>NUCLEOTIDE SEQUENCE [LARGE SCALE GENOMIC DNA]</scope>
    <source>
        <strain>ATCC 700825 / FA 1090</strain>
    </source>
</reference>
<protein>
    <recommendedName>
        <fullName evidence="1">tRNA-cytidine(32) 2-sulfurtransferase</fullName>
        <ecNumber evidence="1">2.8.1.-</ecNumber>
    </recommendedName>
    <alternativeName>
        <fullName evidence="1">Two-thiocytidine biosynthesis protein A</fullName>
    </alternativeName>
    <alternativeName>
        <fullName evidence="1">tRNA 2-thiocytidine biosynthesis protein TtcA</fullName>
    </alternativeName>
</protein>
<feature type="chain" id="PRO_0000348771" description="tRNA-cytidine(32) 2-sulfurtransferase">
    <location>
        <begin position="1"/>
        <end position="319"/>
    </location>
</feature>
<feature type="region of interest" description="Disordered" evidence="2">
    <location>
        <begin position="272"/>
        <end position="297"/>
    </location>
</feature>
<feature type="short sequence motif" description="PP-loop motif" evidence="1">
    <location>
        <begin position="43"/>
        <end position="48"/>
    </location>
</feature>
<feature type="compositionally biased region" description="Basic and acidic residues" evidence="2">
    <location>
        <begin position="276"/>
        <end position="286"/>
    </location>
</feature>
<feature type="binding site" evidence="1">
    <location>
        <position position="118"/>
    </location>
    <ligand>
        <name>[4Fe-4S] cluster</name>
        <dbReference type="ChEBI" id="CHEBI:49883"/>
    </ligand>
</feature>
<feature type="binding site" evidence="1">
    <location>
        <position position="121"/>
    </location>
    <ligand>
        <name>[4Fe-4S] cluster</name>
        <dbReference type="ChEBI" id="CHEBI:49883"/>
    </ligand>
</feature>
<feature type="binding site" evidence="1">
    <location>
        <position position="209"/>
    </location>
    <ligand>
        <name>[4Fe-4S] cluster</name>
        <dbReference type="ChEBI" id="CHEBI:49883"/>
    </ligand>
</feature>
<comment type="function">
    <text evidence="1">Catalyzes the ATP-dependent 2-thiolation of cytidine in position 32 of tRNA, to form 2-thiocytidine (s(2)C32). The sulfur atoms are provided by the cysteine/cysteine desulfurase (IscS) system.</text>
</comment>
<comment type="catalytic activity">
    <reaction evidence="1">
        <text>cytidine(32) in tRNA + S-sulfanyl-L-cysteinyl-[cysteine desulfurase] + AH2 + ATP = 2-thiocytidine(32) in tRNA + L-cysteinyl-[cysteine desulfurase] + A + AMP + diphosphate + H(+)</text>
        <dbReference type="Rhea" id="RHEA:57048"/>
        <dbReference type="Rhea" id="RHEA-COMP:10288"/>
        <dbReference type="Rhea" id="RHEA-COMP:12157"/>
        <dbReference type="Rhea" id="RHEA-COMP:12158"/>
        <dbReference type="Rhea" id="RHEA-COMP:14821"/>
        <dbReference type="ChEBI" id="CHEBI:13193"/>
        <dbReference type="ChEBI" id="CHEBI:15378"/>
        <dbReference type="ChEBI" id="CHEBI:17499"/>
        <dbReference type="ChEBI" id="CHEBI:29950"/>
        <dbReference type="ChEBI" id="CHEBI:30616"/>
        <dbReference type="ChEBI" id="CHEBI:33019"/>
        <dbReference type="ChEBI" id="CHEBI:61963"/>
        <dbReference type="ChEBI" id="CHEBI:82748"/>
        <dbReference type="ChEBI" id="CHEBI:141453"/>
        <dbReference type="ChEBI" id="CHEBI:456215"/>
    </reaction>
    <physiologicalReaction direction="left-to-right" evidence="1">
        <dbReference type="Rhea" id="RHEA:57049"/>
    </physiologicalReaction>
</comment>
<comment type="cofactor">
    <cofactor evidence="1">
        <name>Mg(2+)</name>
        <dbReference type="ChEBI" id="CHEBI:18420"/>
    </cofactor>
</comment>
<comment type="cofactor">
    <cofactor evidence="1">
        <name>[4Fe-4S] cluster</name>
        <dbReference type="ChEBI" id="CHEBI:49883"/>
    </cofactor>
    <text evidence="1">Binds 1 [4Fe-4S] cluster per subunit. The cluster is chelated by three Cys residues, the fourth Fe has a free coordination site that may bind a sulfur atom transferred from the persulfide of IscS.</text>
</comment>
<comment type="pathway">
    <text evidence="1">tRNA modification.</text>
</comment>
<comment type="subunit">
    <text evidence="1">Homodimer.</text>
</comment>
<comment type="subcellular location">
    <subcellularLocation>
        <location evidence="1">Cytoplasm</location>
    </subcellularLocation>
</comment>
<comment type="miscellaneous">
    <text evidence="1">The thiolation reaction likely consists of two steps: a first activation step by ATP to form an adenylated intermediate of the target base of tRNA, and a second nucleophilic substitution step of the sulfur (S) atom supplied by the hydrosulfide attached to the Fe-S cluster.</text>
</comment>
<comment type="similarity">
    <text evidence="1">Belongs to the TtcA family.</text>
</comment>
<dbReference type="EC" id="2.8.1.-" evidence="1"/>
<dbReference type="EMBL" id="AE004969">
    <property type="protein sequence ID" value="AAW89281.1"/>
    <property type="molecule type" value="Genomic_DNA"/>
</dbReference>
<dbReference type="RefSeq" id="WP_003692918.1">
    <property type="nucleotide sequence ID" value="NC_002946.2"/>
</dbReference>
<dbReference type="RefSeq" id="YP_207693.1">
    <property type="nucleotide sequence ID" value="NC_002946.2"/>
</dbReference>
<dbReference type="SMR" id="Q5F956"/>
<dbReference type="STRING" id="242231.NGO_0547"/>
<dbReference type="DNASU" id="3282109"/>
<dbReference type="KEGG" id="ngo:NGO_0547"/>
<dbReference type="PATRIC" id="fig|242231.10.peg.645"/>
<dbReference type="HOGENOM" id="CLU_026481_0_0_4"/>
<dbReference type="Proteomes" id="UP000000535">
    <property type="component" value="Chromosome"/>
</dbReference>
<dbReference type="GO" id="GO:0005737">
    <property type="term" value="C:cytoplasm"/>
    <property type="evidence" value="ECO:0007669"/>
    <property type="project" value="UniProtKB-SubCell"/>
</dbReference>
<dbReference type="GO" id="GO:0051539">
    <property type="term" value="F:4 iron, 4 sulfur cluster binding"/>
    <property type="evidence" value="ECO:0007669"/>
    <property type="project" value="UniProtKB-UniRule"/>
</dbReference>
<dbReference type="GO" id="GO:0005524">
    <property type="term" value="F:ATP binding"/>
    <property type="evidence" value="ECO:0007669"/>
    <property type="project" value="UniProtKB-UniRule"/>
</dbReference>
<dbReference type="GO" id="GO:0000287">
    <property type="term" value="F:magnesium ion binding"/>
    <property type="evidence" value="ECO:0007669"/>
    <property type="project" value="UniProtKB-UniRule"/>
</dbReference>
<dbReference type="GO" id="GO:0016783">
    <property type="term" value="F:sulfurtransferase activity"/>
    <property type="evidence" value="ECO:0007669"/>
    <property type="project" value="UniProtKB-UniRule"/>
</dbReference>
<dbReference type="GO" id="GO:0000049">
    <property type="term" value="F:tRNA binding"/>
    <property type="evidence" value="ECO:0007669"/>
    <property type="project" value="UniProtKB-KW"/>
</dbReference>
<dbReference type="GO" id="GO:0034227">
    <property type="term" value="P:tRNA thio-modification"/>
    <property type="evidence" value="ECO:0007669"/>
    <property type="project" value="UniProtKB-UniRule"/>
</dbReference>
<dbReference type="CDD" id="cd24138">
    <property type="entry name" value="TtcA-like"/>
    <property type="match status" value="1"/>
</dbReference>
<dbReference type="Gene3D" id="3.40.50.620">
    <property type="entry name" value="HUPs"/>
    <property type="match status" value="1"/>
</dbReference>
<dbReference type="HAMAP" id="MF_01850">
    <property type="entry name" value="TtcA"/>
    <property type="match status" value="1"/>
</dbReference>
<dbReference type="InterPro" id="IPR014729">
    <property type="entry name" value="Rossmann-like_a/b/a_fold"/>
</dbReference>
<dbReference type="InterPro" id="IPR011063">
    <property type="entry name" value="TilS/TtcA_N"/>
</dbReference>
<dbReference type="InterPro" id="IPR012089">
    <property type="entry name" value="tRNA_Cyd_32_2_STrfase"/>
</dbReference>
<dbReference type="InterPro" id="IPR035107">
    <property type="entry name" value="tRNA_thiolation_TtcA_Ctu1"/>
</dbReference>
<dbReference type="NCBIfam" id="NF007972">
    <property type="entry name" value="PRK10696.1"/>
    <property type="match status" value="1"/>
</dbReference>
<dbReference type="PANTHER" id="PTHR43686:SF1">
    <property type="entry name" value="AMINOTRAN_5 DOMAIN-CONTAINING PROTEIN"/>
    <property type="match status" value="1"/>
</dbReference>
<dbReference type="PANTHER" id="PTHR43686">
    <property type="entry name" value="SULFURTRANSFERASE-RELATED"/>
    <property type="match status" value="1"/>
</dbReference>
<dbReference type="Pfam" id="PF01171">
    <property type="entry name" value="ATP_bind_3"/>
    <property type="match status" value="1"/>
</dbReference>
<dbReference type="PIRSF" id="PIRSF004976">
    <property type="entry name" value="ATPase_YdaO"/>
    <property type="match status" value="1"/>
</dbReference>
<dbReference type="SUPFAM" id="SSF52402">
    <property type="entry name" value="Adenine nucleotide alpha hydrolases-like"/>
    <property type="match status" value="1"/>
</dbReference>
<organism>
    <name type="scientific">Neisseria gonorrhoeae (strain ATCC 700825 / FA 1090)</name>
    <dbReference type="NCBI Taxonomy" id="242231"/>
    <lineage>
        <taxon>Bacteria</taxon>
        <taxon>Pseudomonadati</taxon>
        <taxon>Pseudomonadota</taxon>
        <taxon>Betaproteobacteria</taxon>
        <taxon>Neisseriales</taxon>
        <taxon>Neisseriaceae</taxon>
        <taxon>Neisseria</taxon>
    </lineage>
</organism>
<keyword id="KW-0004">4Fe-4S</keyword>
<keyword id="KW-0067">ATP-binding</keyword>
<keyword id="KW-0963">Cytoplasm</keyword>
<keyword id="KW-0408">Iron</keyword>
<keyword id="KW-0411">Iron-sulfur</keyword>
<keyword id="KW-0460">Magnesium</keyword>
<keyword id="KW-0479">Metal-binding</keyword>
<keyword id="KW-0547">Nucleotide-binding</keyword>
<keyword id="KW-1185">Reference proteome</keyword>
<keyword id="KW-0694">RNA-binding</keyword>
<keyword id="KW-0808">Transferase</keyword>
<keyword id="KW-0819">tRNA processing</keyword>
<keyword id="KW-0820">tRNA-binding</keyword>
<gene>
    <name evidence="1" type="primary">ttcA</name>
    <name type="ordered locus">NGO_0547</name>
</gene>
<evidence type="ECO:0000255" key="1">
    <source>
        <dbReference type="HAMAP-Rule" id="MF_01850"/>
    </source>
</evidence>
<evidence type="ECO:0000256" key="2">
    <source>
        <dbReference type="SAM" id="MobiDB-lite"/>
    </source>
</evidence>
<name>TTCA_NEIG1</name>
<sequence>MSKKTKQELENNKLSKRLRHAVGDTINDFNMIEPGDKIMVCLSGGKDSYALLDILRRLQASAPIDFELVAVNLDQKQPGFPEEVLPTYLESIGVPYKIVEEDTYSTVKRVLDEGKTTCSLCSRLRRGILYRTAKELGCTKIALGHHRDDILATMFLNMFYGGKLKAMPPKLVSDNGEHIVIRPLAYVKEKDLIKYAELKQFPIIPCNLCGSQPNLQRQVIGDMLRDWDKRFPGRIESMFSALQNVVPSHLADTELFDFAGLERGQNLKHGGDLAFDSEKMPERFSDGSEEDESEIKIEPQKAERKVINILANKPKTCGP</sequence>
<accession>Q5F956</accession>